<protein>
    <recommendedName>
        <fullName>DNA nucleotidylexotransferase</fullName>
        <ecNumber>2.7.7.31</ecNumber>
    </recommendedName>
    <alternativeName>
        <fullName>Terminal addition enzyme</fullName>
    </alternativeName>
    <alternativeName>
        <fullName>Terminal deoxynucleotidyltransferase</fullName>
        <shortName>TDT</shortName>
        <shortName>Terminal transferase</shortName>
    </alternativeName>
</protein>
<evidence type="ECO:0000250" key="1">
    <source>
        <dbReference type="UniProtKB" id="P04053"/>
    </source>
</evidence>
<evidence type="ECO:0000250" key="2">
    <source>
        <dbReference type="UniProtKB" id="P06526"/>
    </source>
</evidence>
<evidence type="ECO:0000250" key="3">
    <source>
        <dbReference type="UniProtKB" id="P09838"/>
    </source>
</evidence>
<evidence type="ECO:0000255" key="4">
    <source>
        <dbReference type="PROSITE-ProRule" id="PRU00033"/>
    </source>
</evidence>
<evidence type="ECO:0000305" key="5"/>
<comment type="function">
    <text evidence="3">Template-independent DNA polymerase which catalyzes the random addition of deoxynucleoside 5'-triphosphate to the 3'-end of a DNA initiator. One of the in vivo functions of this enzyme is the addition of nucleotides at the junction (N region) of rearranged Ig heavy chain and T-cell receptor gene segments during the maturation of B- and T-cells.</text>
</comment>
<comment type="catalytic activity">
    <reaction evidence="3">
        <text>DNA(n) + a 2'-deoxyribonucleoside 5'-triphosphate = DNA(n+1) + diphosphate</text>
        <dbReference type="Rhea" id="RHEA:22508"/>
        <dbReference type="Rhea" id="RHEA-COMP:17339"/>
        <dbReference type="Rhea" id="RHEA-COMP:17340"/>
        <dbReference type="ChEBI" id="CHEBI:33019"/>
        <dbReference type="ChEBI" id="CHEBI:61560"/>
        <dbReference type="ChEBI" id="CHEBI:173112"/>
        <dbReference type="EC" id="2.7.7.31"/>
    </reaction>
</comment>
<comment type="cofactor">
    <cofactor evidence="3">
        <name>Mg(2+)</name>
        <dbReference type="ChEBI" id="CHEBI:18420"/>
    </cofactor>
    <text evidence="3">Can also utilize other divalent cations, such as Mn(2+) and Co(2+) (in vitro).</text>
</comment>
<comment type="subunit">
    <text evidence="1">Interacts with PRP19 and DNTTIP1. Interacts with TRERF1. Forms a ternary complex with DNTTIP2 and core histone. Released from this complex by PCNA (By similarity).</text>
</comment>
<comment type="subcellular location">
    <subcellularLocation>
        <location evidence="1">Nucleus</location>
    </subcellularLocation>
</comment>
<comment type="similarity">
    <text evidence="5">Belongs to the DNA polymerase type-X family.</text>
</comment>
<organism>
    <name type="scientific">Monodelphis domestica</name>
    <name type="common">Gray short-tailed opossum</name>
    <dbReference type="NCBI Taxonomy" id="13616"/>
    <lineage>
        <taxon>Eukaryota</taxon>
        <taxon>Metazoa</taxon>
        <taxon>Chordata</taxon>
        <taxon>Craniata</taxon>
        <taxon>Vertebrata</taxon>
        <taxon>Euteleostomi</taxon>
        <taxon>Mammalia</taxon>
        <taxon>Metatheria</taxon>
        <taxon>Didelphimorphia</taxon>
        <taxon>Didelphidae</taxon>
        <taxon>Monodelphis</taxon>
    </lineage>
</organism>
<keyword id="KW-0460">Magnesium</keyword>
<keyword id="KW-0479">Metal-binding</keyword>
<keyword id="KW-0548">Nucleotidyltransferase</keyword>
<keyword id="KW-0539">Nucleus</keyword>
<keyword id="KW-1185">Reference proteome</keyword>
<keyword id="KW-0780">Terminal addition</keyword>
<keyword id="KW-0808">Transferase</keyword>
<proteinExistence type="evidence at transcript level"/>
<feature type="chain" id="PRO_0000218793" description="DNA nucleotidylexotransferase">
    <location>
        <begin position="1"/>
        <end position="518"/>
    </location>
</feature>
<feature type="domain" description="BRCT" evidence="4">
    <location>
        <begin position="27"/>
        <end position="124"/>
    </location>
</feature>
<feature type="region of interest" description="Mediates interaction with DNTTIP2" evidence="1">
    <location>
        <begin position="153"/>
        <end position="518"/>
    </location>
</feature>
<feature type="region of interest" description="Involved in DNA binding" evidence="3">
    <location>
        <begin position="260"/>
        <end position="264"/>
    </location>
</feature>
<feature type="short sequence motif" description="Nuclear localization signal" evidence="2">
    <location>
        <begin position="11"/>
        <end position="17"/>
    </location>
</feature>
<feature type="binding site" evidence="3">
    <location>
        <begin position="335"/>
        <end position="340"/>
    </location>
    <ligand>
        <name>a 2'-deoxyribonucleoside 5'-triphosphate</name>
        <dbReference type="ChEBI" id="CHEBI:61560"/>
    </ligand>
</feature>
<feature type="binding site" evidence="3">
    <location>
        <begin position="344"/>
        <end position="347"/>
    </location>
    <ligand>
        <name>a 2'-deoxyribonucleoside 5'-triphosphate</name>
        <dbReference type="ChEBI" id="CHEBI:61560"/>
    </ligand>
</feature>
<feature type="binding site" evidence="3">
    <location>
        <position position="345"/>
    </location>
    <ligand>
        <name>Mg(2+)</name>
        <dbReference type="ChEBI" id="CHEBI:18420"/>
    </ligand>
</feature>
<feature type="binding site" evidence="3">
    <location>
        <position position="347"/>
    </location>
    <ligand>
        <name>Mg(2+)</name>
        <dbReference type="ChEBI" id="CHEBI:18420"/>
    </ligand>
</feature>
<feature type="binding site" evidence="3">
    <location>
        <position position="442"/>
    </location>
    <ligand>
        <name>Mg(2+)</name>
        <dbReference type="ChEBI" id="CHEBI:18420"/>
    </ligand>
</feature>
<feature type="binding site" evidence="3">
    <location>
        <begin position="457"/>
        <end position="458"/>
    </location>
    <ligand>
        <name>a 2'-deoxyribonucleoside 5'-triphosphate</name>
        <dbReference type="ChEBI" id="CHEBI:61560"/>
    </ligand>
</feature>
<name>TDT_MONDO</name>
<gene>
    <name type="primary">DNTT</name>
    <name type="synonym">TDT</name>
</gene>
<dbReference type="EC" id="2.7.7.31"/>
<dbReference type="EMBL" id="U91571">
    <property type="protein sequence ID" value="AAC17587.1"/>
    <property type="molecule type" value="mRNA"/>
</dbReference>
<dbReference type="RefSeq" id="NP_001028151.1">
    <property type="nucleotide sequence ID" value="NM_001032979.1"/>
</dbReference>
<dbReference type="SMR" id="O02789"/>
<dbReference type="FunCoup" id="O02789">
    <property type="interactions" value="36"/>
</dbReference>
<dbReference type="STRING" id="13616.ENSMODP00000005738"/>
<dbReference type="GeneID" id="554183"/>
<dbReference type="KEGG" id="mdo:554183"/>
<dbReference type="CTD" id="1791"/>
<dbReference type="eggNOG" id="KOG2534">
    <property type="taxonomic scope" value="Eukaryota"/>
</dbReference>
<dbReference type="InParanoid" id="O02789"/>
<dbReference type="OrthoDB" id="205514at2759"/>
<dbReference type="Proteomes" id="UP000002280">
    <property type="component" value="Unplaced"/>
</dbReference>
<dbReference type="GO" id="GO:0005634">
    <property type="term" value="C:nucleus"/>
    <property type="evidence" value="ECO:0000250"/>
    <property type="project" value="UniProtKB"/>
</dbReference>
<dbReference type="GO" id="GO:0003677">
    <property type="term" value="F:DNA binding"/>
    <property type="evidence" value="ECO:0007669"/>
    <property type="project" value="InterPro"/>
</dbReference>
<dbReference type="GO" id="GO:0003912">
    <property type="term" value="F:DNA nucleotidylexotransferase activity"/>
    <property type="evidence" value="ECO:0000250"/>
    <property type="project" value="UniProtKB"/>
</dbReference>
<dbReference type="GO" id="GO:0003887">
    <property type="term" value="F:DNA-directed DNA polymerase activity"/>
    <property type="evidence" value="ECO:0007669"/>
    <property type="project" value="InterPro"/>
</dbReference>
<dbReference type="GO" id="GO:0046872">
    <property type="term" value="F:metal ion binding"/>
    <property type="evidence" value="ECO:0007669"/>
    <property type="project" value="UniProtKB-KW"/>
</dbReference>
<dbReference type="GO" id="GO:0006259">
    <property type="term" value="P:DNA metabolic process"/>
    <property type="evidence" value="ECO:0000250"/>
    <property type="project" value="UniProtKB"/>
</dbReference>
<dbReference type="GO" id="GO:0006304">
    <property type="term" value="P:DNA modification"/>
    <property type="evidence" value="ECO:0007669"/>
    <property type="project" value="UniProtKB-KW"/>
</dbReference>
<dbReference type="GO" id="GO:0006303">
    <property type="term" value="P:double-strand break repair via nonhomologous end joining"/>
    <property type="evidence" value="ECO:0000318"/>
    <property type="project" value="GO_Central"/>
</dbReference>
<dbReference type="CDD" id="cd00141">
    <property type="entry name" value="NT_POLXc"/>
    <property type="match status" value="1"/>
</dbReference>
<dbReference type="FunFam" id="3.30.210.10:FF:000003">
    <property type="entry name" value="DNA nucleotidylexotransferase"/>
    <property type="match status" value="1"/>
</dbReference>
<dbReference type="FunFam" id="3.30.460.10:FF:000028">
    <property type="entry name" value="DNA nucleotidylexotransferase"/>
    <property type="match status" value="1"/>
</dbReference>
<dbReference type="FunFam" id="3.40.50.10190:FF:000041">
    <property type="entry name" value="DNA nucleotidylexotransferase"/>
    <property type="match status" value="1"/>
</dbReference>
<dbReference type="FunFam" id="1.10.150.20:FF:000010">
    <property type="entry name" value="DNA polymerase lambda"/>
    <property type="match status" value="1"/>
</dbReference>
<dbReference type="FunFam" id="1.10.150.110:FF:000003">
    <property type="entry name" value="DNA polymerase mu"/>
    <property type="match status" value="1"/>
</dbReference>
<dbReference type="Gene3D" id="1.10.150.20">
    <property type="entry name" value="5' to 3' exonuclease, C-terminal subdomain"/>
    <property type="match status" value="1"/>
</dbReference>
<dbReference type="Gene3D" id="3.30.460.10">
    <property type="entry name" value="Beta Polymerase, domain 2"/>
    <property type="match status" value="1"/>
</dbReference>
<dbReference type="Gene3D" id="3.40.50.10190">
    <property type="entry name" value="BRCT domain"/>
    <property type="match status" value="1"/>
</dbReference>
<dbReference type="Gene3D" id="1.10.150.110">
    <property type="entry name" value="DNA polymerase beta, N-terminal domain-like"/>
    <property type="match status" value="1"/>
</dbReference>
<dbReference type="Gene3D" id="3.30.210.10">
    <property type="entry name" value="DNA polymerase, thumb domain"/>
    <property type="match status" value="1"/>
</dbReference>
<dbReference type="InterPro" id="IPR001357">
    <property type="entry name" value="BRCT_dom"/>
</dbReference>
<dbReference type="InterPro" id="IPR036420">
    <property type="entry name" value="BRCT_dom_sf"/>
</dbReference>
<dbReference type="InterPro" id="IPR002054">
    <property type="entry name" value="DNA-dir_DNA_pol_X"/>
</dbReference>
<dbReference type="InterPro" id="IPR019843">
    <property type="entry name" value="DNA_pol-X_BS"/>
</dbReference>
<dbReference type="InterPro" id="IPR010996">
    <property type="entry name" value="DNA_pol_b-like_N"/>
</dbReference>
<dbReference type="InterPro" id="IPR028207">
    <property type="entry name" value="DNA_pol_B_palm_palm"/>
</dbReference>
<dbReference type="InterPro" id="IPR018944">
    <property type="entry name" value="DNA_pol_lambd_fingers_domain"/>
</dbReference>
<dbReference type="InterPro" id="IPR027421">
    <property type="entry name" value="DNA_pol_lamdba_lyase_dom_sf"/>
</dbReference>
<dbReference type="InterPro" id="IPR037160">
    <property type="entry name" value="DNA_Pol_thumb_sf"/>
</dbReference>
<dbReference type="InterPro" id="IPR022312">
    <property type="entry name" value="DNA_pol_X"/>
</dbReference>
<dbReference type="InterPro" id="IPR043519">
    <property type="entry name" value="NT_sf"/>
</dbReference>
<dbReference type="InterPro" id="IPR029398">
    <property type="entry name" value="PolB_thumb"/>
</dbReference>
<dbReference type="InterPro" id="IPR027292">
    <property type="entry name" value="TdT"/>
</dbReference>
<dbReference type="InterPro" id="IPR001726">
    <property type="entry name" value="TdT/Mu"/>
</dbReference>
<dbReference type="PANTHER" id="PTHR11276:SF21">
    <property type="entry name" value="DNA NUCLEOTIDYLEXOTRANSFERASE"/>
    <property type="match status" value="1"/>
</dbReference>
<dbReference type="PANTHER" id="PTHR11276">
    <property type="entry name" value="DNA POLYMERASE TYPE-X FAMILY MEMBER"/>
    <property type="match status" value="1"/>
</dbReference>
<dbReference type="Pfam" id="PF00533">
    <property type="entry name" value="BRCT"/>
    <property type="match status" value="1"/>
</dbReference>
<dbReference type="Pfam" id="PF14792">
    <property type="entry name" value="DNA_pol_B_palm"/>
    <property type="match status" value="1"/>
</dbReference>
<dbReference type="Pfam" id="PF14791">
    <property type="entry name" value="DNA_pol_B_thumb"/>
    <property type="match status" value="1"/>
</dbReference>
<dbReference type="Pfam" id="PF10391">
    <property type="entry name" value="DNA_pol_lambd_f"/>
    <property type="match status" value="1"/>
</dbReference>
<dbReference type="Pfam" id="PF14716">
    <property type="entry name" value="HHH_8"/>
    <property type="match status" value="1"/>
</dbReference>
<dbReference type="PIRSF" id="PIRSF000817">
    <property type="entry name" value="DNA_NT"/>
    <property type="match status" value="1"/>
</dbReference>
<dbReference type="PIRSF" id="PIRSF501175">
    <property type="entry name" value="TDT"/>
    <property type="match status" value="1"/>
</dbReference>
<dbReference type="PRINTS" id="PR00869">
    <property type="entry name" value="DNAPOLX"/>
</dbReference>
<dbReference type="PRINTS" id="PR00871">
    <property type="entry name" value="DNAPOLXTDT"/>
</dbReference>
<dbReference type="SMART" id="SM00292">
    <property type="entry name" value="BRCT"/>
    <property type="match status" value="1"/>
</dbReference>
<dbReference type="SMART" id="SM00483">
    <property type="entry name" value="POLXc"/>
    <property type="match status" value="1"/>
</dbReference>
<dbReference type="SUPFAM" id="SSF52113">
    <property type="entry name" value="BRCT domain"/>
    <property type="match status" value="1"/>
</dbReference>
<dbReference type="SUPFAM" id="SSF47802">
    <property type="entry name" value="DNA polymerase beta, N-terminal domain-like"/>
    <property type="match status" value="1"/>
</dbReference>
<dbReference type="SUPFAM" id="SSF81301">
    <property type="entry name" value="Nucleotidyltransferase"/>
    <property type="match status" value="1"/>
</dbReference>
<dbReference type="SUPFAM" id="SSF81585">
    <property type="entry name" value="PsbU/PolX domain-like"/>
    <property type="match status" value="1"/>
</dbReference>
<dbReference type="PROSITE" id="PS50172">
    <property type="entry name" value="BRCT"/>
    <property type="match status" value="1"/>
</dbReference>
<dbReference type="PROSITE" id="PS00522">
    <property type="entry name" value="DNA_POLYMERASE_X"/>
    <property type="match status" value="1"/>
</dbReference>
<sequence length="518" mass="60010">MHRIRTIDSDFGKKRQKKMDNHISSMIYEIKFHEFVLFILEKKMGATRRTFLTDLARKKGFRVENELSNSVTHIVAENNSGSDVLAWLKTHKMEKTTQFELLDISWLIECMKVGKPVDTKGKYQLMESRVDSANPDPTAGTLNILPPTTKTISQYACQRRTTINNHNQRFTDAFEILAKNYEFKENDDTCLTFMRAISVLKCLPFEVVSLKDTEGLPWIGDEVKGIMEEIIEDGESLEVQAVLNDERYQSFKLFTSVFGVGLKTADKWYRMGFRTLNKIRSDKTLKLTKMQKAGLCYYEDLIDCVSKAEADAVSLLVQDAVWTFLPDALVTITGGFRRGKEFGHDVDFLITSPGAEKEQEDQLLQKVTNLWKKQGLLLYCDLIESTFEDLKLPSRKIDALDHFQKCFLILKLYHHKEDKRKWEMPTGSNESEAKSWKAIRVDLVVCPYDRYAFALLGWSGSRQFERDLRRYATHEKKMMLDNHALYDKTKKIFLKAKSEEEIFAHLGLEYIQPSERNA</sequence>
<accession>O02789</accession>
<reference key="1">
    <citation type="journal article" date="1998" name="Immunogenetics">
        <title>Opossum (Monodelphis domestica) terminal deoxynucleotidyl transferase gene.</title>
        <authorList>
            <person name="Guth A.M."/>
            <person name="Rosenberg G.H."/>
            <person name="Miller R.D."/>
        </authorList>
    </citation>
    <scope>NUCLEOTIDE SEQUENCE [MRNA]</scope>
</reference>